<keyword id="KW-0678">Repressor</keyword>
<keyword id="KW-0346">Stress response</keyword>
<keyword id="KW-0804">Transcription</keyword>
<keyword id="KW-0805">Transcription regulation</keyword>
<comment type="function">
    <text evidence="1">Negative regulator of class I heat shock genes (grpE-dnaK-dnaJ and groELS operons). Prevents heat-shock induction of these operons.</text>
</comment>
<comment type="similarity">
    <text evidence="1">Belongs to the HrcA family.</text>
</comment>
<feature type="chain" id="PRO_1000092814" description="Heat-inducible transcription repressor HrcA">
    <location>
        <begin position="1"/>
        <end position="348"/>
    </location>
</feature>
<organism>
    <name type="scientific">Lacticaseibacillus casei (strain BL23)</name>
    <name type="common">Lactobacillus casei</name>
    <dbReference type="NCBI Taxonomy" id="543734"/>
    <lineage>
        <taxon>Bacteria</taxon>
        <taxon>Bacillati</taxon>
        <taxon>Bacillota</taxon>
        <taxon>Bacilli</taxon>
        <taxon>Lactobacillales</taxon>
        <taxon>Lactobacillaceae</taxon>
        <taxon>Lacticaseibacillus</taxon>
    </lineage>
</organism>
<gene>
    <name evidence="1" type="primary">hrcA</name>
    <name type="ordered locus">LCABL_17800</name>
</gene>
<name>HRCA_LACCB</name>
<reference key="1">
    <citation type="submission" date="2008-06" db="EMBL/GenBank/DDBJ databases">
        <title>Lactobacillus casei BL23 complete genome sequence.</title>
        <authorList>
            <person name="Maze A."/>
            <person name="Boel G."/>
            <person name="Bourand A."/>
            <person name="Loux V."/>
            <person name="Gibrat J.F."/>
            <person name="Zuniga M."/>
            <person name="Hartke A."/>
            <person name="Deutscher J."/>
        </authorList>
    </citation>
    <scope>NUCLEOTIDE SEQUENCE [LARGE SCALE GENOMIC DNA]</scope>
    <source>
        <strain>BL23</strain>
    </source>
</reference>
<dbReference type="EMBL" id="FM177140">
    <property type="protein sequence ID" value="CAQ66860.1"/>
    <property type="molecule type" value="Genomic_DNA"/>
</dbReference>
<dbReference type="SMR" id="B3WEQ9"/>
<dbReference type="KEGG" id="lcb:LCABL_17800"/>
<dbReference type="HOGENOM" id="CLU_050019_1_0_9"/>
<dbReference type="GO" id="GO:0003677">
    <property type="term" value="F:DNA binding"/>
    <property type="evidence" value="ECO:0007669"/>
    <property type="project" value="InterPro"/>
</dbReference>
<dbReference type="GO" id="GO:0003700">
    <property type="term" value="F:DNA-binding transcription factor activity"/>
    <property type="evidence" value="ECO:0007669"/>
    <property type="project" value="InterPro"/>
</dbReference>
<dbReference type="GO" id="GO:0045892">
    <property type="term" value="P:negative regulation of DNA-templated transcription"/>
    <property type="evidence" value="ECO:0007669"/>
    <property type="project" value="UniProtKB-UniRule"/>
</dbReference>
<dbReference type="Gene3D" id="3.30.450.40">
    <property type="match status" value="1"/>
</dbReference>
<dbReference type="Gene3D" id="3.30.390.60">
    <property type="entry name" value="Heat-inducible transcription repressor hrca homolog, domain 3"/>
    <property type="match status" value="1"/>
</dbReference>
<dbReference type="Gene3D" id="1.10.10.10">
    <property type="entry name" value="Winged helix-like DNA-binding domain superfamily/Winged helix DNA-binding domain"/>
    <property type="match status" value="1"/>
</dbReference>
<dbReference type="HAMAP" id="MF_00081">
    <property type="entry name" value="HrcA"/>
    <property type="match status" value="1"/>
</dbReference>
<dbReference type="InterPro" id="IPR001034">
    <property type="entry name" value="DeoR_HTH"/>
</dbReference>
<dbReference type="InterPro" id="IPR029016">
    <property type="entry name" value="GAF-like_dom_sf"/>
</dbReference>
<dbReference type="InterPro" id="IPR002571">
    <property type="entry name" value="HrcA"/>
</dbReference>
<dbReference type="InterPro" id="IPR021153">
    <property type="entry name" value="HrcA_C"/>
</dbReference>
<dbReference type="InterPro" id="IPR036388">
    <property type="entry name" value="WH-like_DNA-bd_sf"/>
</dbReference>
<dbReference type="InterPro" id="IPR036390">
    <property type="entry name" value="WH_DNA-bd_sf"/>
</dbReference>
<dbReference type="InterPro" id="IPR023120">
    <property type="entry name" value="WHTH_transcript_rep_HrcA_IDD"/>
</dbReference>
<dbReference type="NCBIfam" id="TIGR00331">
    <property type="entry name" value="hrcA"/>
    <property type="match status" value="1"/>
</dbReference>
<dbReference type="PANTHER" id="PTHR34824">
    <property type="entry name" value="HEAT-INDUCIBLE TRANSCRIPTION REPRESSOR HRCA"/>
    <property type="match status" value="1"/>
</dbReference>
<dbReference type="PANTHER" id="PTHR34824:SF1">
    <property type="entry name" value="HEAT-INDUCIBLE TRANSCRIPTION REPRESSOR HRCA"/>
    <property type="match status" value="1"/>
</dbReference>
<dbReference type="Pfam" id="PF01628">
    <property type="entry name" value="HrcA"/>
    <property type="match status" value="1"/>
</dbReference>
<dbReference type="Pfam" id="PF08220">
    <property type="entry name" value="HTH_DeoR"/>
    <property type="match status" value="1"/>
</dbReference>
<dbReference type="PIRSF" id="PIRSF005485">
    <property type="entry name" value="HrcA"/>
    <property type="match status" value="1"/>
</dbReference>
<dbReference type="SUPFAM" id="SSF55781">
    <property type="entry name" value="GAF domain-like"/>
    <property type="match status" value="1"/>
</dbReference>
<dbReference type="SUPFAM" id="SSF46785">
    <property type="entry name" value="Winged helix' DNA-binding domain"/>
    <property type="match status" value="1"/>
</dbReference>
<sequence>MLTKRQLLVLKEIIRLFTESGQPVGSKTLMQELPVHVSSATIRNDMAALEDAGLITKTHSSSGRVPSTQGYRYYLDHLVEPVRVSRHDLATIKQELGQRYSKMDEIVAQSVQILSNLTSYTAISLGPEVNNIKLTGFRLVPLGNHQVMAILVTNNGNVENQVFTVPPSISSDELEKAIRIVNDQLVGLPLVQVAQRLRTDVPSMLMQYLTSPDGFLDIFGNVLKSAASERFYVGGRLNLMDYLGDSDIHELKKIMSLIDADHGDLTELLGGPIRQTPVQVRLGPELKPIDLANLSLITASYDVGGHGTGMIALLGPTQMPYSKMIGLLDVFREELAKRLTDYYANFDQ</sequence>
<protein>
    <recommendedName>
        <fullName evidence="1">Heat-inducible transcription repressor HrcA</fullName>
    </recommendedName>
</protein>
<proteinExistence type="inferred from homology"/>
<evidence type="ECO:0000255" key="1">
    <source>
        <dbReference type="HAMAP-Rule" id="MF_00081"/>
    </source>
</evidence>
<accession>B3WEQ9</accession>